<name>NDHJ_BUXMI</name>
<proteinExistence type="inferred from homology"/>
<evidence type="ECO:0000255" key="1">
    <source>
        <dbReference type="HAMAP-Rule" id="MF_01357"/>
    </source>
</evidence>
<comment type="function">
    <text evidence="1">NDH shuttles electrons from NAD(P)H:plastoquinone, via FMN and iron-sulfur (Fe-S) centers, to quinones in the photosynthetic chain and possibly in a chloroplast respiratory chain. The immediate electron acceptor for the enzyme in this species is believed to be plastoquinone. Couples the redox reaction to proton translocation, and thus conserves the redox energy in a proton gradient.</text>
</comment>
<comment type="catalytic activity">
    <reaction evidence="1">
        <text>a plastoquinone + NADH + (n+1) H(+)(in) = a plastoquinol + NAD(+) + n H(+)(out)</text>
        <dbReference type="Rhea" id="RHEA:42608"/>
        <dbReference type="Rhea" id="RHEA-COMP:9561"/>
        <dbReference type="Rhea" id="RHEA-COMP:9562"/>
        <dbReference type="ChEBI" id="CHEBI:15378"/>
        <dbReference type="ChEBI" id="CHEBI:17757"/>
        <dbReference type="ChEBI" id="CHEBI:57540"/>
        <dbReference type="ChEBI" id="CHEBI:57945"/>
        <dbReference type="ChEBI" id="CHEBI:62192"/>
    </reaction>
</comment>
<comment type="catalytic activity">
    <reaction evidence="1">
        <text>a plastoquinone + NADPH + (n+1) H(+)(in) = a plastoquinol + NADP(+) + n H(+)(out)</text>
        <dbReference type="Rhea" id="RHEA:42612"/>
        <dbReference type="Rhea" id="RHEA-COMP:9561"/>
        <dbReference type="Rhea" id="RHEA-COMP:9562"/>
        <dbReference type="ChEBI" id="CHEBI:15378"/>
        <dbReference type="ChEBI" id="CHEBI:17757"/>
        <dbReference type="ChEBI" id="CHEBI:57783"/>
        <dbReference type="ChEBI" id="CHEBI:58349"/>
        <dbReference type="ChEBI" id="CHEBI:62192"/>
    </reaction>
</comment>
<comment type="subunit">
    <text evidence="1">NDH is composed of at least 16 different subunits, 5 of which are encoded in the nucleus.</text>
</comment>
<comment type="subcellular location">
    <subcellularLocation>
        <location evidence="1">Plastid</location>
        <location evidence="1">Chloroplast thylakoid membrane</location>
        <topology evidence="1">Peripheral membrane protein</topology>
        <orientation evidence="1">Stromal side</orientation>
    </subcellularLocation>
</comment>
<comment type="similarity">
    <text evidence="1">Belongs to the complex I 30 kDa subunit family.</text>
</comment>
<gene>
    <name evidence="1" type="primary">ndhJ</name>
</gene>
<sequence>MQGRLSAWLVKHGLVHRSLGFDYQGIETLQIKPEDWHSIAVISYVYGYNYLRSQCAYDVAPGGLLASVYHLTRIQYGVDQPEEICIKVFTPRKNPRIPSVFWIWKSADFQERESYDMLGISYDNHPRLKRILMPESWIGWPLRKDYIAPNFYEIQDAH</sequence>
<dbReference type="EC" id="7.1.1.-" evidence="1"/>
<dbReference type="EMBL" id="EF380351">
    <property type="protein sequence ID" value="ABQ45252.1"/>
    <property type="molecule type" value="Genomic_DNA"/>
</dbReference>
<dbReference type="RefSeq" id="YP_001294187.1">
    <property type="nucleotide sequence ID" value="NC_009599.1"/>
</dbReference>
<dbReference type="SMR" id="A6MM39"/>
<dbReference type="GeneID" id="5236899"/>
<dbReference type="GO" id="GO:0009535">
    <property type="term" value="C:chloroplast thylakoid membrane"/>
    <property type="evidence" value="ECO:0007669"/>
    <property type="project" value="UniProtKB-SubCell"/>
</dbReference>
<dbReference type="GO" id="GO:0008137">
    <property type="term" value="F:NADH dehydrogenase (ubiquinone) activity"/>
    <property type="evidence" value="ECO:0007669"/>
    <property type="project" value="InterPro"/>
</dbReference>
<dbReference type="GO" id="GO:0048038">
    <property type="term" value="F:quinone binding"/>
    <property type="evidence" value="ECO:0007669"/>
    <property type="project" value="UniProtKB-KW"/>
</dbReference>
<dbReference type="GO" id="GO:0019684">
    <property type="term" value="P:photosynthesis, light reaction"/>
    <property type="evidence" value="ECO:0007669"/>
    <property type="project" value="UniProtKB-UniRule"/>
</dbReference>
<dbReference type="FunFam" id="3.30.460.80:FF:000004">
    <property type="entry name" value="NAD(P)H-quinone oxidoreductase subunit J, chloroplastic"/>
    <property type="match status" value="1"/>
</dbReference>
<dbReference type="Gene3D" id="3.30.460.80">
    <property type="entry name" value="NADH:ubiquinone oxidoreductase, 30kDa subunit"/>
    <property type="match status" value="1"/>
</dbReference>
<dbReference type="HAMAP" id="MF_01357">
    <property type="entry name" value="NDH1_NuoC"/>
    <property type="match status" value="1"/>
</dbReference>
<dbReference type="InterPro" id="IPR010218">
    <property type="entry name" value="NADH_DH_suC"/>
</dbReference>
<dbReference type="InterPro" id="IPR037232">
    <property type="entry name" value="NADH_quin_OxRdtase_su_C/D-like"/>
</dbReference>
<dbReference type="InterPro" id="IPR001268">
    <property type="entry name" value="NADH_UbQ_OxRdtase_30kDa_su"/>
</dbReference>
<dbReference type="InterPro" id="IPR020396">
    <property type="entry name" value="NADH_UbQ_OxRdtase_CS"/>
</dbReference>
<dbReference type="NCBIfam" id="NF009141">
    <property type="entry name" value="PRK12494.1"/>
    <property type="match status" value="1"/>
</dbReference>
<dbReference type="PANTHER" id="PTHR10884:SF14">
    <property type="entry name" value="NADH DEHYDROGENASE [UBIQUINONE] IRON-SULFUR PROTEIN 3, MITOCHONDRIAL"/>
    <property type="match status" value="1"/>
</dbReference>
<dbReference type="PANTHER" id="PTHR10884">
    <property type="entry name" value="NADH DEHYDROGENASE UBIQUINONE IRON-SULFUR PROTEIN 3"/>
    <property type="match status" value="1"/>
</dbReference>
<dbReference type="Pfam" id="PF00329">
    <property type="entry name" value="Complex1_30kDa"/>
    <property type="match status" value="1"/>
</dbReference>
<dbReference type="SUPFAM" id="SSF143243">
    <property type="entry name" value="Nqo5-like"/>
    <property type="match status" value="1"/>
</dbReference>
<dbReference type="PROSITE" id="PS00542">
    <property type="entry name" value="COMPLEX1_30K"/>
    <property type="match status" value="1"/>
</dbReference>
<feature type="chain" id="PRO_0000358246" description="NAD(P)H-quinone oxidoreductase subunit J, chloroplastic">
    <location>
        <begin position="1"/>
        <end position="158"/>
    </location>
</feature>
<keyword id="KW-0150">Chloroplast</keyword>
<keyword id="KW-0472">Membrane</keyword>
<keyword id="KW-0520">NAD</keyword>
<keyword id="KW-0521">NADP</keyword>
<keyword id="KW-0934">Plastid</keyword>
<keyword id="KW-0618">Plastoquinone</keyword>
<keyword id="KW-0874">Quinone</keyword>
<keyword id="KW-0793">Thylakoid</keyword>
<keyword id="KW-1278">Translocase</keyword>
<keyword id="KW-0813">Transport</keyword>
<accession>A6MM39</accession>
<protein>
    <recommendedName>
        <fullName evidence="1">NAD(P)H-quinone oxidoreductase subunit J, chloroplastic</fullName>
        <ecNumber evidence="1">7.1.1.-</ecNumber>
    </recommendedName>
    <alternativeName>
        <fullName>NAD(P)H dehydrogenase subunit J</fullName>
    </alternativeName>
    <alternativeName>
        <fullName evidence="1">NADH-plastoquinone oxidoreductase subunit J</fullName>
    </alternativeName>
</protein>
<reference key="1">
    <citation type="journal article" date="2007" name="Mol. Phylogenet. Evol.">
        <title>Phylogenetic and evolutionary implications of complete chloroplast genome sequences of four early-diverging angiosperms: Buxus (Buxaceae), Chloranthus (Chloranthaceae), Dioscorea (Dioscoreaceae), and Illicium (Schisandraceae).</title>
        <authorList>
            <person name="Hansen D.R."/>
            <person name="Dastidar S.G."/>
            <person name="Cai Z."/>
            <person name="Penaflor C."/>
            <person name="Kuehl J.V."/>
            <person name="Boore J.L."/>
            <person name="Jansen R.K."/>
        </authorList>
    </citation>
    <scope>NUCLEOTIDE SEQUENCE [LARGE SCALE GENOMIC DNA]</scope>
</reference>
<geneLocation type="chloroplast"/>
<organism>
    <name type="scientific">Buxus microphylla</name>
    <name type="common">Littleleaf boxwood</name>
    <name type="synonym">Japanese boxwood</name>
    <dbReference type="NCBI Taxonomy" id="153571"/>
    <lineage>
        <taxon>Eukaryota</taxon>
        <taxon>Viridiplantae</taxon>
        <taxon>Streptophyta</taxon>
        <taxon>Embryophyta</taxon>
        <taxon>Tracheophyta</taxon>
        <taxon>Spermatophyta</taxon>
        <taxon>Magnoliopsida</taxon>
        <taxon>Buxales</taxon>
        <taxon>Buxaceae</taxon>
        <taxon>Buxus</taxon>
    </lineage>
</organism>